<organism>
    <name type="scientific">Mycobacterium sp. (strain KMS)</name>
    <dbReference type="NCBI Taxonomy" id="189918"/>
    <lineage>
        <taxon>Bacteria</taxon>
        <taxon>Bacillati</taxon>
        <taxon>Actinomycetota</taxon>
        <taxon>Actinomycetes</taxon>
        <taxon>Mycobacteriales</taxon>
        <taxon>Mycobacteriaceae</taxon>
        <taxon>Mycobacterium</taxon>
    </lineage>
</organism>
<feature type="chain" id="PRO_1000050721" description="Large ribosomal subunit protein bL35">
    <location>
        <begin position="1"/>
        <end position="64"/>
    </location>
</feature>
<feature type="region of interest" description="Disordered" evidence="2">
    <location>
        <begin position="1"/>
        <end position="20"/>
    </location>
</feature>
<feature type="region of interest" description="Disordered" evidence="2">
    <location>
        <begin position="37"/>
        <end position="64"/>
    </location>
</feature>
<comment type="similarity">
    <text evidence="1">Belongs to the bacterial ribosomal protein bL35 family.</text>
</comment>
<protein>
    <recommendedName>
        <fullName evidence="1">Large ribosomal subunit protein bL35</fullName>
    </recommendedName>
    <alternativeName>
        <fullName evidence="3">50S ribosomal protein L35</fullName>
    </alternativeName>
</protein>
<accession>A1UHB0</accession>
<keyword id="KW-0687">Ribonucleoprotein</keyword>
<keyword id="KW-0689">Ribosomal protein</keyword>
<proteinExistence type="inferred from homology"/>
<name>RL35_MYCSK</name>
<reference key="1">
    <citation type="submission" date="2006-12" db="EMBL/GenBank/DDBJ databases">
        <title>Complete sequence of chromosome of Mycobacterium sp. KMS.</title>
        <authorList>
            <consortium name="US DOE Joint Genome Institute"/>
            <person name="Copeland A."/>
            <person name="Lucas S."/>
            <person name="Lapidus A."/>
            <person name="Barry K."/>
            <person name="Detter J.C."/>
            <person name="Glavina del Rio T."/>
            <person name="Hammon N."/>
            <person name="Israni S."/>
            <person name="Dalin E."/>
            <person name="Tice H."/>
            <person name="Pitluck S."/>
            <person name="Kiss H."/>
            <person name="Brettin T."/>
            <person name="Bruce D."/>
            <person name="Han C."/>
            <person name="Tapia R."/>
            <person name="Gilna P."/>
            <person name="Schmutz J."/>
            <person name="Larimer F."/>
            <person name="Land M."/>
            <person name="Hauser L."/>
            <person name="Kyrpides N."/>
            <person name="Mikhailova N."/>
            <person name="Miller C.D."/>
            <person name="Richardson P."/>
        </authorList>
    </citation>
    <scope>NUCLEOTIDE SEQUENCE [LARGE SCALE GENOMIC DNA]</scope>
    <source>
        <strain>KMS</strain>
    </source>
</reference>
<evidence type="ECO:0000255" key="1">
    <source>
        <dbReference type="HAMAP-Rule" id="MF_00514"/>
    </source>
</evidence>
<evidence type="ECO:0000256" key="2">
    <source>
        <dbReference type="SAM" id="MobiDB-lite"/>
    </source>
</evidence>
<evidence type="ECO:0000305" key="3"/>
<gene>
    <name evidence="1" type="primary">rpmI</name>
    <name type="ordered locus">Mkms_3024</name>
</gene>
<sequence>MPKAKTHSGASKRFRRTGTGKIVRQKANRRHLMEHKPTKRTRRLAGRTQVSANDAPRINKMLNG</sequence>
<dbReference type="EMBL" id="CP000518">
    <property type="protein sequence ID" value="ABL92218.1"/>
    <property type="molecule type" value="Genomic_DNA"/>
</dbReference>
<dbReference type="SMR" id="A1UHB0"/>
<dbReference type="STRING" id="189918.Mkms_3024"/>
<dbReference type="KEGG" id="mkm:Mkms_3024"/>
<dbReference type="HOGENOM" id="CLU_169643_4_2_11"/>
<dbReference type="OrthoDB" id="9804851at2"/>
<dbReference type="GO" id="GO:0022625">
    <property type="term" value="C:cytosolic large ribosomal subunit"/>
    <property type="evidence" value="ECO:0007669"/>
    <property type="project" value="TreeGrafter"/>
</dbReference>
<dbReference type="GO" id="GO:0003735">
    <property type="term" value="F:structural constituent of ribosome"/>
    <property type="evidence" value="ECO:0007669"/>
    <property type="project" value="InterPro"/>
</dbReference>
<dbReference type="GO" id="GO:0006412">
    <property type="term" value="P:translation"/>
    <property type="evidence" value="ECO:0007669"/>
    <property type="project" value="UniProtKB-UniRule"/>
</dbReference>
<dbReference type="FunFam" id="4.10.410.60:FF:000001">
    <property type="entry name" value="50S ribosomal protein L35"/>
    <property type="match status" value="1"/>
</dbReference>
<dbReference type="Gene3D" id="4.10.410.60">
    <property type="match status" value="1"/>
</dbReference>
<dbReference type="HAMAP" id="MF_00514">
    <property type="entry name" value="Ribosomal_bL35"/>
    <property type="match status" value="1"/>
</dbReference>
<dbReference type="InterPro" id="IPR001706">
    <property type="entry name" value="Ribosomal_bL35"/>
</dbReference>
<dbReference type="InterPro" id="IPR021137">
    <property type="entry name" value="Ribosomal_bL35-like"/>
</dbReference>
<dbReference type="InterPro" id="IPR018265">
    <property type="entry name" value="Ribosomal_bL35_CS"/>
</dbReference>
<dbReference type="InterPro" id="IPR037229">
    <property type="entry name" value="Ribosomal_bL35_sf"/>
</dbReference>
<dbReference type="NCBIfam" id="TIGR00001">
    <property type="entry name" value="rpmI_bact"/>
    <property type="match status" value="1"/>
</dbReference>
<dbReference type="PANTHER" id="PTHR33343">
    <property type="entry name" value="54S RIBOSOMAL PROTEIN BL35M"/>
    <property type="match status" value="1"/>
</dbReference>
<dbReference type="PANTHER" id="PTHR33343:SF1">
    <property type="entry name" value="LARGE RIBOSOMAL SUBUNIT PROTEIN BL35M"/>
    <property type="match status" value="1"/>
</dbReference>
<dbReference type="Pfam" id="PF01632">
    <property type="entry name" value="Ribosomal_L35p"/>
    <property type="match status" value="1"/>
</dbReference>
<dbReference type="PRINTS" id="PR00064">
    <property type="entry name" value="RIBOSOMALL35"/>
</dbReference>
<dbReference type="SUPFAM" id="SSF143034">
    <property type="entry name" value="L35p-like"/>
    <property type="match status" value="1"/>
</dbReference>
<dbReference type="PROSITE" id="PS00936">
    <property type="entry name" value="RIBOSOMAL_L35"/>
    <property type="match status" value="1"/>
</dbReference>